<organism>
    <name type="scientific">Methanosphaera stadtmanae (strain ATCC 43021 / DSM 3091 / JCM 11832 / MCB-3)</name>
    <dbReference type="NCBI Taxonomy" id="339860"/>
    <lineage>
        <taxon>Archaea</taxon>
        <taxon>Methanobacteriati</taxon>
        <taxon>Methanobacteriota</taxon>
        <taxon>Methanomada group</taxon>
        <taxon>Methanobacteria</taxon>
        <taxon>Methanobacteriales</taxon>
        <taxon>Methanobacteriaceae</taxon>
        <taxon>Methanosphaera</taxon>
    </lineage>
</organism>
<name>TRM56_METST</name>
<proteinExistence type="inferred from homology"/>
<accession>Q2NF55</accession>
<protein>
    <recommendedName>
        <fullName evidence="1">tRNA (cytidine(56)-2'-O)-methyltransferase</fullName>
        <ecNumber evidence="1">2.1.1.206</ecNumber>
    </recommendedName>
    <alternativeName>
        <fullName evidence="1">tRNA ribose 2'-O-methyltransferase aTrm56</fullName>
    </alternativeName>
</protein>
<comment type="function">
    <text evidence="1">Specifically catalyzes the AdoMet-dependent 2'-O-ribose methylation of cytidine at position 56 in tRNAs.</text>
</comment>
<comment type="catalytic activity">
    <reaction evidence="1">
        <text>cytidine(56) in tRNA + S-adenosyl-L-methionine = 2'-O-methylcytidine(56) in tRNA + S-adenosyl-L-homocysteine + H(+)</text>
        <dbReference type="Rhea" id="RHEA:42968"/>
        <dbReference type="Rhea" id="RHEA-COMP:10308"/>
        <dbReference type="Rhea" id="RHEA-COMP:10309"/>
        <dbReference type="ChEBI" id="CHEBI:15378"/>
        <dbReference type="ChEBI" id="CHEBI:57856"/>
        <dbReference type="ChEBI" id="CHEBI:59789"/>
        <dbReference type="ChEBI" id="CHEBI:74495"/>
        <dbReference type="ChEBI" id="CHEBI:82748"/>
        <dbReference type="EC" id="2.1.1.206"/>
    </reaction>
</comment>
<comment type="subunit">
    <text evidence="1">Homodimer.</text>
</comment>
<comment type="subcellular location">
    <subcellularLocation>
        <location evidence="1">Cytoplasm</location>
    </subcellularLocation>
</comment>
<comment type="similarity">
    <text evidence="1">Belongs to the aTrm56 family.</text>
</comment>
<reference key="1">
    <citation type="journal article" date="2006" name="J. Bacteriol.">
        <title>The genome sequence of Methanosphaera stadtmanae reveals why this human intestinal archaeon is restricted to methanol and H2 for methane formation and ATP synthesis.</title>
        <authorList>
            <person name="Fricke W.F."/>
            <person name="Seedorf H."/>
            <person name="Henne A."/>
            <person name="Kruer M."/>
            <person name="Liesegang H."/>
            <person name="Hedderich R."/>
            <person name="Gottschalk G."/>
            <person name="Thauer R.K."/>
        </authorList>
    </citation>
    <scope>NUCLEOTIDE SEQUENCE [LARGE SCALE GENOMIC DNA]</scope>
    <source>
        <strain>ATCC 43021 / DSM 3091 / JCM 11832 / MCB-3</strain>
    </source>
</reference>
<dbReference type="EC" id="2.1.1.206" evidence="1"/>
<dbReference type="EMBL" id="CP000102">
    <property type="protein sequence ID" value="ABC57548.1"/>
    <property type="molecule type" value="Genomic_DNA"/>
</dbReference>
<dbReference type="RefSeq" id="WP_011406747.1">
    <property type="nucleotide sequence ID" value="NC_007681.1"/>
</dbReference>
<dbReference type="SMR" id="Q2NF55"/>
<dbReference type="STRING" id="339860.Msp_1167"/>
<dbReference type="KEGG" id="mst:Msp_1167"/>
<dbReference type="eggNOG" id="arCOG01857">
    <property type="taxonomic scope" value="Archaea"/>
</dbReference>
<dbReference type="HOGENOM" id="CLU_123709_0_0_2"/>
<dbReference type="OrthoDB" id="14397at2157"/>
<dbReference type="Proteomes" id="UP000001931">
    <property type="component" value="Chromosome"/>
</dbReference>
<dbReference type="GO" id="GO:0005737">
    <property type="term" value="C:cytoplasm"/>
    <property type="evidence" value="ECO:0007669"/>
    <property type="project" value="UniProtKB-SubCell"/>
</dbReference>
<dbReference type="GO" id="GO:0106059">
    <property type="term" value="F:tRNA (cytidine(56)-2'-O)-methyltransferase activity"/>
    <property type="evidence" value="ECO:0007669"/>
    <property type="project" value="UniProtKB-EC"/>
</dbReference>
<dbReference type="GO" id="GO:0002128">
    <property type="term" value="P:tRNA nucleoside ribose methylation"/>
    <property type="evidence" value="ECO:0007669"/>
    <property type="project" value="UniProtKB-UniRule"/>
</dbReference>
<dbReference type="CDD" id="cd18083">
    <property type="entry name" value="aTrm56-like"/>
    <property type="match status" value="1"/>
</dbReference>
<dbReference type="Gene3D" id="3.40.1280.10">
    <property type="match status" value="1"/>
</dbReference>
<dbReference type="HAMAP" id="MF_00077">
    <property type="entry name" value="tRNA_methyltr_aTrm56"/>
    <property type="match status" value="1"/>
</dbReference>
<dbReference type="InterPro" id="IPR029028">
    <property type="entry name" value="Alpha/beta_knot_MTases"/>
</dbReference>
<dbReference type="InterPro" id="IPR029026">
    <property type="entry name" value="tRNA_m1G_MTases_N"/>
</dbReference>
<dbReference type="InterPro" id="IPR002845">
    <property type="entry name" value="tRNA_mtfrase_aTrm56"/>
</dbReference>
<dbReference type="PANTHER" id="PTHR42197">
    <property type="entry name" value="TRNA (CYTIDINE(56)-2'-O)-METHYLTRANSFERASE"/>
    <property type="match status" value="1"/>
</dbReference>
<dbReference type="PANTHER" id="PTHR42197:SF1">
    <property type="entry name" value="TRNA (CYTIDINE(56)-2'-O)-METHYLTRANSFERASE"/>
    <property type="match status" value="1"/>
</dbReference>
<dbReference type="Pfam" id="PF01994">
    <property type="entry name" value="Trm56"/>
    <property type="match status" value="1"/>
</dbReference>
<dbReference type="PIRSF" id="PIRSF016123">
    <property type="entry name" value="UCP016123"/>
    <property type="match status" value="1"/>
</dbReference>
<dbReference type="SUPFAM" id="SSF75217">
    <property type="entry name" value="alpha/beta knot"/>
    <property type="match status" value="1"/>
</dbReference>
<keyword id="KW-0963">Cytoplasm</keyword>
<keyword id="KW-0489">Methyltransferase</keyword>
<keyword id="KW-1185">Reference proteome</keyword>
<keyword id="KW-0949">S-adenosyl-L-methionine</keyword>
<keyword id="KW-0808">Transferase</keyword>
<keyword id="KW-0819">tRNA processing</keyword>
<gene>
    <name type="ordered locus">Msp_1167</name>
</gene>
<feature type="chain" id="PRO_0000365315" description="tRNA (cytidine(56)-2'-O)-methyltransferase">
    <location>
        <begin position="1"/>
        <end position="175"/>
    </location>
</feature>
<feature type="binding site" evidence="1">
    <location>
        <position position="83"/>
    </location>
    <ligand>
        <name>S-adenosyl-L-methionine</name>
        <dbReference type="ChEBI" id="CHEBI:59789"/>
    </ligand>
</feature>
<sequence>MITVLRLDHRLGRDTRITTHVCLTARAFGADKVILSGEHDKHIIESAQKVVENWGGDFEVEYQKAYRPVIKEHKQKGFEIIHLTMYGKHVEDVVPTIRDNNRDKLIIVGGSRVPTDVYEAADWNLSVTNQPHSEVAALAICLHYMMDGSELKTVYDDGKMQIVPNNEHKEVIKNE</sequence>
<evidence type="ECO:0000255" key="1">
    <source>
        <dbReference type="HAMAP-Rule" id="MF_00077"/>
    </source>
</evidence>